<organism>
    <name type="scientific">Acinetobacter baumannii (strain AYE)</name>
    <dbReference type="NCBI Taxonomy" id="509173"/>
    <lineage>
        <taxon>Bacteria</taxon>
        <taxon>Pseudomonadati</taxon>
        <taxon>Pseudomonadota</taxon>
        <taxon>Gammaproteobacteria</taxon>
        <taxon>Moraxellales</taxon>
        <taxon>Moraxellaceae</taxon>
        <taxon>Acinetobacter</taxon>
        <taxon>Acinetobacter calcoaceticus/baumannii complex</taxon>
    </lineage>
</organism>
<sequence length="447" mass="50012">MKTPKVGFVSLGCPKALVDSERILTQLKTEGYQVASDYDGADLVVVNTCGFIESAVQESLDAIGEAMSENGRVIVTGCLGKDEDKIRQMHPNVLKVTGAAAYQDVMEAVHEYVPAPPKHNPFIDLVPEQGIRLTPKHYAYLKISEGCNHRCTFCIIPSMRGDLVSRPVGSVLEEAAALKRAGVKEILVISQDTSAYGVDTKYKLDFWNGQPVKTKFFDMCEALGQLGIWVRLHYVYPYPHVDAVIDLMAQGKILPYLDIPFQHASPRVLKLMKRPAHSENTLEKIKLWREKCPNLVIRSTFVVGFPGETEEDFQILLDWLVEAQLDRVGCFTYSPVEGATANDLPDHVPEEIKQERYERFMQVQQQISAAKLQKRIGQTMTVLVDSLEDEYPVAVARSYADAPEIDGNVFVEDIDKSTIQPGDMLEVEITDADEYDLFAKLIKIKSV</sequence>
<keyword id="KW-0004">4Fe-4S</keyword>
<keyword id="KW-0963">Cytoplasm</keyword>
<keyword id="KW-0408">Iron</keyword>
<keyword id="KW-0411">Iron-sulfur</keyword>
<keyword id="KW-0479">Metal-binding</keyword>
<keyword id="KW-0949">S-adenosyl-L-methionine</keyword>
<keyword id="KW-0808">Transferase</keyword>
<proteinExistence type="inferred from homology"/>
<gene>
    <name evidence="1" type="primary">rimO</name>
    <name type="ordered locus">ABAYE1576</name>
</gene>
<comment type="function">
    <text evidence="1">Catalyzes the methylthiolation of an aspartic acid residue of ribosomal protein uS12.</text>
</comment>
<comment type="catalytic activity">
    <reaction evidence="1">
        <text>L-aspartate(89)-[ribosomal protein uS12]-hydrogen + (sulfur carrier)-SH + AH2 + 2 S-adenosyl-L-methionine = 3-methylsulfanyl-L-aspartate(89)-[ribosomal protein uS12]-hydrogen + (sulfur carrier)-H + 5'-deoxyadenosine + L-methionine + A + S-adenosyl-L-homocysteine + 2 H(+)</text>
        <dbReference type="Rhea" id="RHEA:37087"/>
        <dbReference type="Rhea" id="RHEA-COMP:10460"/>
        <dbReference type="Rhea" id="RHEA-COMP:10461"/>
        <dbReference type="Rhea" id="RHEA-COMP:14737"/>
        <dbReference type="Rhea" id="RHEA-COMP:14739"/>
        <dbReference type="ChEBI" id="CHEBI:13193"/>
        <dbReference type="ChEBI" id="CHEBI:15378"/>
        <dbReference type="ChEBI" id="CHEBI:17319"/>
        <dbReference type="ChEBI" id="CHEBI:17499"/>
        <dbReference type="ChEBI" id="CHEBI:29917"/>
        <dbReference type="ChEBI" id="CHEBI:29961"/>
        <dbReference type="ChEBI" id="CHEBI:57844"/>
        <dbReference type="ChEBI" id="CHEBI:57856"/>
        <dbReference type="ChEBI" id="CHEBI:59789"/>
        <dbReference type="ChEBI" id="CHEBI:64428"/>
        <dbReference type="ChEBI" id="CHEBI:73599"/>
        <dbReference type="EC" id="2.8.4.4"/>
    </reaction>
</comment>
<comment type="cofactor">
    <cofactor evidence="1">
        <name>[4Fe-4S] cluster</name>
        <dbReference type="ChEBI" id="CHEBI:49883"/>
    </cofactor>
    <text evidence="1">Binds 2 [4Fe-4S] clusters. One cluster is coordinated with 3 cysteines and an exchangeable S-adenosyl-L-methionine.</text>
</comment>
<comment type="subcellular location">
    <subcellularLocation>
        <location evidence="1">Cytoplasm</location>
    </subcellularLocation>
</comment>
<comment type="similarity">
    <text evidence="1">Belongs to the methylthiotransferase family. RimO subfamily.</text>
</comment>
<reference key="1">
    <citation type="journal article" date="2008" name="PLoS ONE">
        <title>Comparative analysis of Acinetobacters: three genomes for three lifestyles.</title>
        <authorList>
            <person name="Vallenet D."/>
            <person name="Nordmann P."/>
            <person name="Barbe V."/>
            <person name="Poirel L."/>
            <person name="Mangenot S."/>
            <person name="Bataille E."/>
            <person name="Dossat C."/>
            <person name="Gas S."/>
            <person name="Kreimeyer A."/>
            <person name="Lenoble P."/>
            <person name="Oztas S."/>
            <person name="Poulain J."/>
            <person name="Segurens B."/>
            <person name="Robert C."/>
            <person name="Abergel C."/>
            <person name="Claverie J.-M."/>
            <person name="Raoult D."/>
            <person name="Medigue C."/>
            <person name="Weissenbach J."/>
            <person name="Cruveiller S."/>
        </authorList>
    </citation>
    <scope>NUCLEOTIDE SEQUENCE [LARGE SCALE GENOMIC DNA]</scope>
    <source>
        <strain>AYE</strain>
    </source>
</reference>
<dbReference type="EC" id="2.8.4.4" evidence="1"/>
<dbReference type="EMBL" id="CU459141">
    <property type="protein sequence ID" value="CAM86473.1"/>
    <property type="molecule type" value="Genomic_DNA"/>
</dbReference>
<dbReference type="RefSeq" id="WP_000856681.1">
    <property type="nucleotide sequence ID" value="NZ_JBDGFB010000016.1"/>
</dbReference>
<dbReference type="SMR" id="B0V6E8"/>
<dbReference type="EnsemblBacteria" id="CAM86473">
    <property type="protein sequence ID" value="CAM86473"/>
    <property type="gene ID" value="ABAYE1576"/>
</dbReference>
<dbReference type="KEGG" id="aby:ABAYE1576"/>
<dbReference type="HOGENOM" id="CLU_018697_0_0_6"/>
<dbReference type="GO" id="GO:0005829">
    <property type="term" value="C:cytosol"/>
    <property type="evidence" value="ECO:0007669"/>
    <property type="project" value="TreeGrafter"/>
</dbReference>
<dbReference type="GO" id="GO:0051539">
    <property type="term" value="F:4 iron, 4 sulfur cluster binding"/>
    <property type="evidence" value="ECO:0007669"/>
    <property type="project" value="UniProtKB-UniRule"/>
</dbReference>
<dbReference type="GO" id="GO:0035599">
    <property type="term" value="F:aspartic acid methylthiotransferase activity"/>
    <property type="evidence" value="ECO:0007669"/>
    <property type="project" value="TreeGrafter"/>
</dbReference>
<dbReference type="GO" id="GO:0046872">
    <property type="term" value="F:metal ion binding"/>
    <property type="evidence" value="ECO:0007669"/>
    <property type="project" value="UniProtKB-KW"/>
</dbReference>
<dbReference type="GO" id="GO:0103039">
    <property type="term" value="F:protein methylthiotransferase activity"/>
    <property type="evidence" value="ECO:0007669"/>
    <property type="project" value="UniProtKB-EC"/>
</dbReference>
<dbReference type="GO" id="GO:0006400">
    <property type="term" value="P:tRNA modification"/>
    <property type="evidence" value="ECO:0007669"/>
    <property type="project" value="InterPro"/>
</dbReference>
<dbReference type="CDD" id="cd01335">
    <property type="entry name" value="Radical_SAM"/>
    <property type="match status" value="1"/>
</dbReference>
<dbReference type="FunFam" id="3.40.50.12160:FF:000002">
    <property type="entry name" value="Ribosomal protein S12 methylthiotransferase RimO"/>
    <property type="match status" value="1"/>
</dbReference>
<dbReference type="FunFam" id="3.80.30.20:FF:000001">
    <property type="entry name" value="tRNA-2-methylthio-N(6)-dimethylallyladenosine synthase 2"/>
    <property type="match status" value="1"/>
</dbReference>
<dbReference type="Gene3D" id="3.40.50.12160">
    <property type="entry name" value="Methylthiotransferase, N-terminal domain"/>
    <property type="match status" value="1"/>
</dbReference>
<dbReference type="Gene3D" id="2.40.50.140">
    <property type="entry name" value="Nucleic acid-binding proteins"/>
    <property type="match status" value="1"/>
</dbReference>
<dbReference type="Gene3D" id="3.80.30.20">
    <property type="entry name" value="tm_1862 like domain"/>
    <property type="match status" value="1"/>
</dbReference>
<dbReference type="HAMAP" id="MF_01865">
    <property type="entry name" value="MTTase_RimO"/>
    <property type="match status" value="1"/>
</dbReference>
<dbReference type="InterPro" id="IPR006638">
    <property type="entry name" value="Elp3/MiaA/NifB-like_rSAM"/>
</dbReference>
<dbReference type="InterPro" id="IPR005839">
    <property type="entry name" value="Methylthiotransferase"/>
</dbReference>
<dbReference type="InterPro" id="IPR020612">
    <property type="entry name" value="Methylthiotransferase_CS"/>
</dbReference>
<dbReference type="InterPro" id="IPR013848">
    <property type="entry name" value="Methylthiotransferase_N"/>
</dbReference>
<dbReference type="InterPro" id="IPR038135">
    <property type="entry name" value="Methylthiotransferase_N_sf"/>
</dbReference>
<dbReference type="InterPro" id="IPR012340">
    <property type="entry name" value="NA-bd_OB-fold"/>
</dbReference>
<dbReference type="InterPro" id="IPR005840">
    <property type="entry name" value="Ribosomal_uS12_MeSTrfase_RimO"/>
</dbReference>
<dbReference type="InterPro" id="IPR007197">
    <property type="entry name" value="rSAM"/>
</dbReference>
<dbReference type="InterPro" id="IPR023404">
    <property type="entry name" value="rSAM_horseshoe"/>
</dbReference>
<dbReference type="InterPro" id="IPR002792">
    <property type="entry name" value="TRAM_dom"/>
</dbReference>
<dbReference type="NCBIfam" id="TIGR01125">
    <property type="entry name" value="30S ribosomal protein S12 methylthiotransferase RimO"/>
    <property type="match status" value="1"/>
</dbReference>
<dbReference type="NCBIfam" id="TIGR00089">
    <property type="entry name" value="MiaB/RimO family radical SAM methylthiotransferase"/>
    <property type="match status" value="1"/>
</dbReference>
<dbReference type="PANTHER" id="PTHR43837">
    <property type="entry name" value="RIBOSOMAL PROTEIN S12 METHYLTHIOTRANSFERASE RIMO"/>
    <property type="match status" value="1"/>
</dbReference>
<dbReference type="PANTHER" id="PTHR43837:SF1">
    <property type="entry name" value="RIBOSOMAL PROTEIN US12 METHYLTHIOTRANSFERASE RIMO"/>
    <property type="match status" value="1"/>
</dbReference>
<dbReference type="Pfam" id="PF04055">
    <property type="entry name" value="Radical_SAM"/>
    <property type="match status" value="1"/>
</dbReference>
<dbReference type="Pfam" id="PF18693">
    <property type="entry name" value="TRAM_2"/>
    <property type="match status" value="1"/>
</dbReference>
<dbReference type="Pfam" id="PF00919">
    <property type="entry name" value="UPF0004"/>
    <property type="match status" value="1"/>
</dbReference>
<dbReference type="SFLD" id="SFLDG01082">
    <property type="entry name" value="B12-binding_domain_containing"/>
    <property type="match status" value="1"/>
</dbReference>
<dbReference type="SFLD" id="SFLDG01061">
    <property type="entry name" value="methylthiotransferase"/>
    <property type="match status" value="1"/>
</dbReference>
<dbReference type="SFLD" id="SFLDF00274">
    <property type="entry name" value="ribosomal_protein_S12_methylth"/>
    <property type="match status" value="1"/>
</dbReference>
<dbReference type="SMART" id="SM00729">
    <property type="entry name" value="Elp3"/>
    <property type="match status" value="1"/>
</dbReference>
<dbReference type="SUPFAM" id="SSF102114">
    <property type="entry name" value="Radical SAM enzymes"/>
    <property type="match status" value="1"/>
</dbReference>
<dbReference type="PROSITE" id="PS51449">
    <property type="entry name" value="MTTASE_N"/>
    <property type="match status" value="1"/>
</dbReference>
<dbReference type="PROSITE" id="PS01278">
    <property type="entry name" value="MTTASE_RADICAL"/>
    <property type="match status" value="1"/>
</dbReference>
<dbReference type="PROSITE" id="PS51918">
    <property type="entry name" value="RADICAL_SAM"/>
    <property type="match status" value="1"/>
</dbReference>
<dbReference type="PROSITE" id="PS50926">
    <property type="entry name" value="TRAM"/>
    <property type="match status" value="1"/>
</dbReference>
<evidence type="ECO:0000255" key="1">
    <source>
        <dbReference type="HAMAP-Rule" id="MF_01865"/>
    </source>
</evidence>
<evidence type="ECO:0000255" key="2">
    <source>
        <dbReference type="PROSITE-ProRule" id="PRU01266"/>
    </source>
</evidence>
<name>RIMO_ACIBY</name>
<feature type="chain" id="PRO_0000374682" description="Ribosomal protein uS12 methylthiotransferase RimO">
    <location>
        <begin position="1"/>
        <end position="447"/>
    </location>
</feature>
<feature type="domain" description="MTTase N-terminal" evidence="1">
    <location>
        <begin position="4"/>
        <end position="114"/>
    </location>
</feature>
<feature type="domain" description="Radical SAM core" evidence="2">
    <location>
        <begin position="133"/>
        <end position="370"/>
    </location>
</feature>
<feature type="domain" description="TRAM" evidence="1">
    <location>
        <begin position="373"/>
        <end position="443"/>
    </location>
</feature>
<feature type="binding site" evidence="1">
    <location>
        <position position="13"/>
    </location>
    <ligand>
        <name>[4Fe-4S] cluster</name>
        <dbReference type="ChEBI" id="CHEBI:49883"/>
        <label>1</label>
    </ligand>
</feature>
<feature type="binding site" evidence="1">
    <location>
        <position position="49"/>
    </location>
    <ligand>
        <name>[4Fe-4S] cluster</name>
        <dbReference type="ChEBI" id="CHEBI:49883"/>
        <label>1</label>
    </ligand>
</feature>
<feature type="binding site" evidence="1">
    <location>
        <position position="78"/>
    </location>
    <ligand>
        <name>[4Fe-4S] cluster</name>
        <dbReference type="ChEBI" id="CHEBI:49883"/>
        <label>1</label>
    </ligand>
</feature>
<feature type="binding site" evidence="1">
    <location>
        <position position="147"/>
    </location>
    <ligand>
        <name>[4Fe-4S] cluster</name>
        <dbReference type="ChEBI" id="CHEBI:49883"/>
        <label>2</label>
        <note>4Fe-4S-S-AdoMet</note>
    </ligand>
</feature>
<feature type="binding site" evidence="1">
    <location>
        <position position="151"/>
    </location>
    <ligand>
        <name>[4Fe-4S] cluster</name>
        <dbReference type="ChEBI" id="CHEBI:49883"/>
        <label>2</label>
        <note>4Fe-4S-S-AdoMet</note>
    </ligand>
</feature>
<feature type="binding site" evidence="1">
    <location>
        <position position="154"/>
    </location>
    <ligand>
        <name>[4Fe-4S] cluster</name>
        <dbReference type="ChEBI" id="CHEBI:49883"/>
        <label>2</label>
        <note>4Fe-4S-S-AdoMet</note>
    </ligand>
</feature>
<accession>B0V6E8</accession>
<protein>
    <recommendedName>
        <fullName evidence="1">Ribosomal protein uS12 methylthiotransferase RimO</fullName>
        <shortName evidence="1">uS12 MTTase</shortName>
        <shortName evidence="1">uS12 methylthiotransferase</shortName>
        <ecNumber evidence="1">2.8.4.4</ecNumber>
    </recommendedName>
    <alternativeName>
        <fullName evidence="1">Ribosomal protein uS12 (aspartate-C(3))-methylthiotransferase</fullName>
    </alternativeName>
    <alternativeName>
        <fullName evidence="1">Ribosome maturation factor RimO</fullName>
    </alternativeName>
</protein>